<keyword id="KW-0131">Cell cycle</keyword>
<keyword id="KW-0132">Cell division</keyword>
<keyword id="KW-0133">Cell shape</keyword>
<keyword id="KW-0961">Cell wall biogenesis/degradation</keyword>
<keyword id="KW-0963">Cytoplasm</keyword>
<keyword id="KW-0274">FAD</keyword>
<keyword id="KW-0285">Flavoprotein</keyword>
<keyword id="KW-0521">NADP</keyword>
<keyword id="KW-0560">Oxidoreductase</keyword>
<keyword id="KW-0573">Peptidoglycan synthesis</keyword>
<keyword id="KW-1185">Reference proteome</keyword>
<reference key="1">
    <citation type="journal article" date="2004" name="Nat. Biotechnol.">
        <title>Complete sequence and comparative genome analysis of the dairy bacterium Streptococcus thermophilus.</title>
        <authorList>
            <person name="Bolotin A."/>
            <person name="Quinquis B."/>
            <person name="Renault P."/>
            <person name="Sorokin A."/>
            <person name="Ehrlich S.D."/>
            <person name="Kulakauskas S."/>
            <person name="Lapidus A."/>
            <person name="Goltsman E."/>
            <person name="Mazur M."/>
            <person name="Pusch G.D."/>
            <person name="Fonstein M."/>
            <person name="Overbeek R."/>
            <person name="Kyprides N."/>
            <person name="Purnelle B."/>
            <person name="Prozzi D."/>
            <person name="Ngui K."/>
            <person name="Masuy D."/>
            <person name="Hancy F."/>
            <person name="Burteau S."/>
            <person name="Boutry M."/>
            <person name="Delcour J."/>
            <person name="Goffeau A."/>
            <person name="Hols P."/>
        </authorList>
    </citation>
    <scope>NUCLEOTIDE SEQUENCE [LARGE SCALE GENOMIC DNA]</scope>
    <source>
        <strain>ATCC BAA-250 / LMG 18311</strain>
    </source>
</reference>
<feature type="chain" id="PRO_0000224726" description="UDP-N-acetylenolpyruvoylglucosamine reductase">
    <location>
        <begin position="1"/>
        <end position="304"/>
    </location>
</feature>
<feature type="domain" description="FAD-binding PCMH-type" evidence="1">
    <location>
        <begin position="31"/>
        <end position="196"/>
    </location>
</feature>
<feature type="active site" evidence="1">
    <location>
        <position position="175"/>
    </location>
</feature>
<feature type="active site" description="Proton donor" evidence="1">
    <location>
        <position position="225"/>
    </location>
</feature>
<feature type="active site" evidence="1">
    <location>
        <position position="295"/>
    </location>
</feature>
<gene>
    <name evidence="1" type="primary">murB</name>
    <name type="ordered locus">stu1539</name>
</gene>
<accession>Q5M396</accession>
<sequence length="304" mass="33516">MGINMLDELKEDLVGIDIRFDEPLKRYTYTKVGGPADYLAFPRNRYELFRIVKFANKHNIPWMVLGNASNLIVRDGGIRGFVIMFDKLNGIAVNGYQVEAEAGANLIATTKVACFHSLTGFEFAAGIPGSIGGAVFMNAGAYGGEIAHILVSAQVLTKDGDIRTIDARDMRFGYRRSVLQETGEVVISAKFNLKPGDYEQIKHEMNRLNHLRELKQPLEYPSCGSVFKRPPGHFAGQLIMEANLEGHRIGGVEVSTKHAGFMVNVDQGTAKDYEDLIADVIAKVKENSGVTLEPEVRIIGDKLN</sequence>
<protein>
    <recommendedName>
        <fullName evidence="1">UDP-N-acetylenolpyruvoylglucosamine reductase</fullName>
        <ecNumber evidence="1">1.3.1.98</ecNumber>
    </recommendedName>
    <alternativeName>
        <fullName evidence="1">UDP-N-acetylmuramate dehydrogenase</fullName>
    </alternativeName>
</protein>
<organism>
    <name type="scientific">Streptococcus thermophilus (strain ATCC BAA-250 / LMG 18311)</name>
    <dbReference type="NCBI Taxonomy" id="264199"/>
    <lineage>
        <taxon>Bacteria</taxon>
        <taxon>Bacillati</taxon>
        <taxon>Bacillota</taxon>
        <taxon>Bacilli</taxon>
        <taxon>Lactobacillales</taxon>
        <taxon>Streptococcaceae</taxon>
        <taxon>Streptococcus</taxon>
    </lineage>
</organism>
<comment type="function">
    <text evidence="1">Cell wall formation.</text>
</comment>
<comment type="catalytic activity">
    <reaction evidence="1">
        <text>UDP-N-acetyl-alpha-D-muramate + NADP(+) = UDP-N-acetyl-3-O-(1-carboxyvinyl)-alpha-D-glucosamine + NADPH + H(+)</text>
        <dbReference type="Rhea" id="RHEA:12248"/>
        <dbReference type="ChEBI" id="CHEBI:15378"/>
        <dbReference type="ChEBI" id="CHEBI:57783"/>
        <dbReference type="ChEBI" id="CHEBI:58349"/>
        <dbReference type="ChEBI" id="CHEBI:68483"/>
        <dbReference type="ChEBI" id="CHEBI:70757"/>
        <dbReference type="EC" id="1.3.1.98"/>
    </reaction>
</comment>
<comment type="cofactor">
    <cofactor evidence="1">
        <name>FAD</name>
        <dbReference type="ChEBI" id="CHEBI:57692"/>
    </cofactor>
</comment>
<comment type="pathway">
    <text evidence="1">Cell wall biogenesis; peptidoglycan biosynthesis.</text>
</comment>
<comment type="subcellular location">
    <subcellularLocation>
        <location evidence="1">Cytoplasm</location>
    </subcellularLocation>
</comment>
<comment type="similarity">
    <text evidence="1">Belongs to the MurB family.</text>
</comment>
<comment type="sequence caution" evidence="2">
    <conflict type="erroneous initiation">
        <sequence resource="EMBL-CDS" id="AAV61142"/>
    </conflict>
</comment>
<name>MURB_STRT2</name>
<proteinExistence type="inferred from homology"/>
<evidence type="ECO:0000255" key="1">
    <source>
        <dbReference type="HAMAP-Rule" id="MF_00037"/>
    </source>
</evidence>
<evidence type="ECO:0000305" key="2"/>
<dbReference type="EC" id="1.3.1.98" evidence="1"/>
<dbReference type="EMBL" id="CP000023">
    <property type="protein sequence ID" value="AAV61142.1"/>
    <property type="status" value="ALT_INIT"/>
    <property type="molecule type" value="Genomic_DNA"/>
</dbReference>
<dbReference type="SMR" id="Q5M396"/>
<dbReference type="STRING" id="264199.stu1539"/>
<dbReference type="KEGG" id="stl:stu1539"/>
<dbReference type="eggNOG" id="COG0812">
    <property type="taxonomic scope" value="Bacteria"/>
</dbReference>
<dbReference type="HOGENOM" id="CLU_035304_1_1_9"/>
<dbReference type="UniPathway" id="UPA00219"/>
<dbReference type="Proteomes" id="UP000001170">
    <property type="component" value="Chromosome"/>
</dbReference>
<dbReference type="GO" id="GO:0005829">
    <property type="term" value="C:cytosol"/>
    <property type="evidence" value="ECO:0007669"/>
    <property type="project" value="TreeGrafter"/>
</dbReference>
<dbReference type="GO" id="GO:0071949">
    <property type="term" value="F:FAD binding"/>
    <property type="evidence" value="ECO:0007669"/>
    <property type="project" value="InterPro"/>
</dbReference>
<dbReference type="GO" id="GO:0008762">
    <property type="term" value="F:UDP-N-acetylmuramate dehydrogenase activity"/>
    <property type="evidence" value="ECO:0007669"/>
    <property type="project" value="UniProtKB-UniRule"/>
</dbReference>
<dbReference type="GO" id="GO:0051301">
    <property type="term" value="P:cell division"/>
    <property type="evidence" value="ECO:0007669"/>
    <property type="project" value="UniProtKB-KW"/>
</dbReference>
<dbReference type="GO" id="GO:0071555">
    <property type="term" value="P:cell wall organization"/>
    <property type="evidence" value="ECO:0007669"/>
    <property type="project" value="UniProtKB-KW"/>
</dbReference>
<dbReference type="GO" id="GO:0009252">
    <property type="term" value="P:peptidoglycan biosynthetic process"/>
    <property type="evidence" value="ECO:0007669"/>
    <property type="project" value="UniProtKB-UniRule"/>
</dbReference>
<dbReference type="GO" id="GO:0008360">
    <property type="term" value="P:regulation of cell shape"/>
    <property type="evidence" value="ECO:0007669"/>
    <property type="project" value="UniProtKB-KW"/>
</dbReference>
<dbReference type="Gene3D" id="3.30.465.10">
    <property type="match status" value="1"/>
</dbReference>
<dbReference type="Gene3D" id="3.90.78.10">
    <property type="entry name" value="UDP-N-acetylenolpyruvoylglucosamine reductase, C-terminal domain"/>
    <property type="match status" value="1"/>
</dbReference>
<dbReference type="Gene3D" id="3.30.43.10">
    <property type="entry name" value="Uridine Diphospho-n-acetylenolpyruvylglucosamine Reductase, domain 2"/>
    <property type="match status" value="1"/>
</dbReference>
<dbReference type="HAMAP" id="MF_00037">
    <property type="entry name" value="MurB"/>
    <property type="match status" value="1"/>
</dbReference>
<dbReference type="InterPro" id="IPR016166">
    <property type="entry name" value="FAD-bd_PCMH"/>
</dbReference>
<dbReference type="InterPro" id="IPR036318">
    <property type="entry name" value="FAD-bd_PCMH-like_sf"/>
</dbReference>
<dbReference type="InterPro" id="IPR016167">
    <property type="entry name" value="FAD-bd_PCMH_sub1"/>
</dbReference>
<dbReference type="InterPro" id="IPR016169">
    <property type="entry name" value="FAD-bd_PCMH_sub2"/>
</dbReference>
<dbReference type="InterPro" id="IPR003170">
    <property type="entry name" value="MurB"/>
</dbReference>
<dbReference type="InterPro" id="IPR011601">
    <property type="entry name" value="MurB_C"/>
</dbReference>
<dbReference type="InterPro" id="IPR036635">
    <property type="entry name" value="MurB_C_sf"/>
</dbReference>
<dbReference type="InterPro" id="IPR006094">
    <property type="entry name" value="Oxid_FAD_bind_N"/>
</dbReference>
<dbReference type="NCBIfam" id="TIGR00179">
    <property type="entry name" value="murB"/>
    <property type="match status" value="1"/>
</dbReference>
<dbReference type="NCBIfam" id="NF010480">
    <property type="entry name" value="PRK13905.1"/>
    <property type="match status" value="1"/>
</dbReference>
<dbReference type="PANTHER" id="PTHR21071">
    <property type="entry name" value="UDP-N-ACETYLENOLPYRUVOYLGLUCOSAMINE REDUCTASE"/>
    <property type="match status" value="1"/>
</dbReference>
<dbReference type="PANTHER" id="PTHR21071:SF4">
    <property type="entry name" value="UDP-N-ACETYLENOLPYRUVOYLGLUCOSAMINE REDUCTASE"/>
    <property type="match status" value="1"/>
</dbReference>
<dbReference type="Pfam" id="PF01565">
    <property type="entry name" value="FAD_binding_4"/>
    <property type="match status" value="1"/>
</dbReference>
<dbReference type="Pfam" id="PF02873">
    <property type="entry name" value="MurB_C"/>
    <property type="match status" value="1"/>
</dbReference>
<dbReference type="SUPFAM" id="SSF56176">
    <property type="entry name" value="FAD-binding/transporter-associated domain-like"/>
    <property type="match status" value="1"/>
</dbReference>
<dbReference type="SUPFAM" id="SSF56194">
    <property type="entry name" value="Uridine diphospho-N-Acetylenolpyruvylglucosamine reductase, MurB, C-terminal domain"/>
    <property type="match status" value="1"/>
</dbReference>
<dbReference type="PROSITE" id="PS51387">
    <property type="entry name" value="FAD_PCMH"/>
    <property type="match status" value="1"/>
</dbReference>